<accession>Q06128</accession>
<evidence type="ECO:0000250" key="1">
    <source>
        <dbReference type="UniProtKB" id="P00897"/>
    </source>
</evidence>
<evidence type="ECO:0000269" key="2">
    <source>
    </source>
</evidence>
<evidence type="ECO:0000305" key="3"/>
<evidence type="ECO:0007829" key="4">
    <source>
        <dbReference type="PDB" id="1QDL"/>
    </source>
</evidence>
<keyword id="KW-0002">3D-structure</keyword>
<keyword id="KW-0021">Allosteric enzyme</keyword>
<keyword id="KW-0028">Amino-acid biosynthesis</keyword>
<keyword id="KW-0057">Aromatic amino acid biosynthesis</keyword>
<keyword id="KW-0456">Lyase</keyword>
<keyword id="KW-0460">Magnesium</keyword>
<keyword id="KW-0479">Metal-binding</keyword>
<keyword id="KW-1185">Reference proteome</keyword>
<keyword id="KW-0822">Tryptophan biosynthesis</keyword>
<sequence length="421" mass="47652">MEVHPISEFASPFEVFKCIERDFKVAGLLESIGGPQYKARYSVIAWSTNGYLKIHDDPVNILNGYLKDLKLADIPGLFKGGMIGYISYDAVRFWEKIRDLKPAAEDWPYAEFFTPDNIIIYDHNEGKVYVNADLSSVGGCGDIGEFKVSFYDESLNKNSYERIVSESLEYIRSGYIFQVVLSRFYRYIFSGDPLRIYYNLRRINPSPYMFYLKFDEKYLIGSSPELLFRVQDNIVETYPIAGTRPRGADQEEDLKLELELMNSEKDKAEHLMLVDLARNDLGKVCVPGTVKVPELMYVEKYSHVQHIVSKVIGTLKKKYNALNVLSATFPAGTVSGAPKPMAMNIIETLEEYKRGPYAGAVGFISADGNAEFAIAIRTAFLNKELLRIHAGAGIVYDSNPESEYFETEHKLKALKTAIGVR</sequence>
<name>TRPE_SACS2</name>
<dbReference type="EC" id="4.1.3.27"/>
<dbReference type="EMBL" id="M98048">
    <property type="protein sequence ID" value="AAA73379.1"/>
    <property type="molecule type" value="Genomic_DNA"/>
</dbReference>
<dbReference type="EMBL" id="Z50014">
    <property type="protein sequence ID" value="CAA90311.1"/>
    <property type="molecule type" value="Genomic_DNA"/>
</dbReference>
<dbReference type="EMBL" id="AE006641">
    <property type="protein sequence ID" value="AAK41175.1"/>
    <property type="molecule type" value="Genomic_DNA"/>
</dbReference>
<dbReference type="PIR" id="H90239">
    <property type="entry name" value="H90239"/>
</dbReference>
<dbReference type="PIR" id="JC5323">
    <property type="entry name" value="JC5323"/>
</dbReference>
<dbReference type="RefSeq" id="WP_009992309.1">
    <property type="nucleotide sequence ID" value="NC_002754.1"/>
</dbReference>
<dbReference type="PDB" id="1QDL">
    <property type="method" value="X-ray"/>
    <property type="resolution" value="2.50 A"/>
    <property type="chains" value="A=1-421"/>
</dbReference>
<dbReference type="PDBsum" id="1QDL"/>
<dbReference type="SMR" id="Q06128"/>
<dbReference type="DIP" id="DIP-6202N"/>
<dbReference type="FunCoup" id="Q06128">
    <property type="interactions" value="249"/>
</dbReference>
<dbReference type="IntAct" id="Q06128">
    <property type="interactions" value="1"/>
</dbReference>
<dbReference type="MINT" id="Q06128"/>
<dbReference type="STRING" id="273057.SSO0893"/>
<dbReference type="PaxDb" id="273057-SSO0893"/>
<dbReference type="EnsemblBacteria" id="AAK41175">
    <property type="protein sequence ID" value="AAK41175"/>
    <property type="gene ID" value="SSO0893"/>
</dbReference>
<dbReference type="KEGG" id="sso:SSO0893"/>
<dbReference type="PATRIC" id="fig|273057.12.peg.896"/>
<dbReference type="eggNOG" id="arCOG02014">
    <property type="taxonomic scope" value="Archaea"/>
</dbReference>
<dbReference type="HOGENOM" id="CLU_006493_9_3_2"/>
<dbReference type="InParanoid" id="Q06128"/>
<dbReference type="PhylomeDB" id="Q06128"/>
<dbReference type="BioCyc" id="MetaCyc:MONOMER-3603"/>
<dbReference type="BRENDA" id="4.1.3.27">
    <property type="organism ID" value="6163"/>
</dbReference>
<dbReference type="UniPathway" id="UPA00035">
    <property type="reaction ID" value="UER00040"/>
</dbReference>
<dbReference type="EvolutionaryTrace" id="Q06128"/>
<dbReference type="Proteomes" id="UP000001974">
    <property type="component" value="Chromosome"/>
</dbReference>
<dbReference type="GO" id="GO:0004049">
    <property type="term" value="F:anthranilate synthase activity"/>
    <property type="evidence" value="ECO:0007669"/>
    <property type="project" value="UniProtKB-EC"/>
</dbReference>
<dbReference type="GO" id="GO:0046872">
    <property type="term" value="F:metal ion binding"/>
    <property type="evidence" value="ECO:0007669"/>
    <property type="project" value="UniProtKB-KW"/>
</dbReference>
<dbReference type="GO" id="GO:0000162">
    <property type="term" value="P:L-tryptophan biosynthetic process"/>
    <property type="evidence" value="ECO:0000318"/>
    <property type="project" value="GO_Central"/>
</dbReference>
<dbReference type="Gene3D" id="3.60.120.10">
    <property type="entry name" value="Anthranilate synthase"/>
    <property type="match status" value="1"/>
</dbReference>
<dbReference type="InterPro" id="IPR005801">
    <property type="entry name" value="ADC_synthase"/>
</dbReference>
<dbReference type="InterPro" id="IPR019999">
    <property type="entry name" value="Anth_synth_I-like"/>
</dbReference>
<dbReference type="InterPro" id="IPR006805">
    <property type="entry name" value="Anth_synth_I_N"/>
</dbReference>
<dbReference type="InterPro" id="IPR010116">
    <property type="entry name" value="Anthranilate_synth_I_arc_typ"/>
</dbReference>
<dbReference type="InterPro" id="IPR015890">
    <property type="entry name" value="Chorismate_C"/>
</dbReference>
<dbReference type="NCBIfam" id="NF010089">
    <property type="entry name" value="PRK13574.1"/>
    <property type="match status" value="1"/>
</dbReference>
<dbReference type="NCBIfam" id="TIGR01820">
    <property type="entry name" value="TrpE-arch"/>
    <property type="match status" value="1"/>
</dbReference>
<dbReference type="PANTHER" id="PTHR11236">
    <property type="entry name" value="AMINOBENZOATE/ANTHRANILATE SYNTHASE"/>
    <property type="match status" value="1"/>
</dbReference>
<dbReference type="PANTHER" id="PTHR11236:SF9">
    <property type="entry name" value="ANTHRANILATE SYNTHASE COMPONENT 1"/>
    <property type="match status" value="1"/>
</dbReference>
<dbReference type="Pfam" id="PF04715">
    <property type="entry name" value="Anth_synt_I_N"/>
    <property type="match status" value="1"/>
</dbReference>
<dbReference type="Pfam" id="PF00425">
    <property type="entry name" value="Chorismate_bind"/>
    <property type="match status" value="1"/>
</dbReference>
<dbReference type="PRINTS" id="PR00095">
    <property type="entry name" value="ANTSNTHASEI"/>
</dbReference>
<dbReference type="SUPFAM" id="SSF56322">
    <property type="entry name" value="ADC synthase"/>
    <property type="match status" value="1"/>
</dbReference>
<comment type="function">
    <text evidence="2">Part of a heterotetrameric complex that catalyzes the two-step biosynthesis of anthranilate, an intermediate in the biosynthesis of L-tryptophan. In the first step, the glutamine-binding beta subunit (TrpG) of anthranilate synthase (AS) provides the glutamine amidotransferase activity which generates ammonia as a substrate that, along with chorismate, is used in the second step, catalyzed by the large alpha subunit of AS (TrpE) to produce anthranilate. In the absence of TrpG, TrpE can synthesize anthranilate directly from chorismate and high concentrations of ammonia.</text>
</comment>
<comment type="catalytic activity">
    <reaction>
        <text>chorismate + L-glutamine = anthranilate + pyruvate + L-glutamate + H(+)</text>
        <dbReference type="Rhea" id="RHEA:21732"/>
        <dbReference type="ChEBI" id="CHEBI:15361"/>
        <dbReference type="ChEBI" id="CHEBI:15378"/>
        <dbReference type="ChEBI" id="CHEBI:16567"/>
        <dbReference type="ChEBI" id="CHEBI:29748"/>
        <dbReference type="ChEBI" id="CHEBI:29985"/>
        <dbReference type="ChEBI" id="CHEBI:58359"/>
        <dbReference type="EC" id="4.1.3.27"/>
    </reaction>
</comment>
<comment type="cofactor">
    <cofactor evidence="1">
        <name>Mg(2+)</name>
        <dbReference type="ChEBI" id="CHEBI:18420"/>
    </cofactor>
    <text evidence="1">Binds 1 Mg(2+) ion per subunit.</text>
</comment>
<comment type="activity regulation">
    <text evidence="2">Cooperatively feedback inhibited by tryptophan.</text>
</comment>
<comment type="pathway">
    <text>Amino-acid biosynthesis; L-tryptophan biosynthesis; L-tryptophan from chorismate: step 1/5.</text>
</comment>
<comment type="subunit">
    <text evidence="2">Heterotetramer consisting of two non-identical subunits: a beta subunit (TrpG) and a large alpha subunit (TrpE).</text>
</comment>
<comment type="similarity">
    <text evidence="3">Belongs to the anthranilate synthase component I family.</text>
</comment>
<organism>
    <name type="scientific">Saccharolobus solfataricus (strain ATCC 35092 / DSM 1617 / JCM 11322 / P2)</name>
    <name type="common">Sulfolobus solfataricus</name>
    <dbReference type="NCBI Taxonomy" id="273057"/>
    <lineage>
        <taxon>Archaea</taxon>
        <taxon>Thermoproteota</taxon>
        <taxon>Thermoprotei</taxon>
        <taxon>Sulfolobales</taxon>
        <taxon>Sulfolobaceae</taxon>
        <taxon>Saccharolobus</taxon>
    </lineage>
</organism>
<reference key="1">
    <citation type="journal article" date="1993" name="J. Bacteriol.">
        <title>Tryptophan biosynthesis genes trpEGC in the thermoacidophilic archaebacterium Sulfolobus solfataricus.</title>
        <authorList>
            <person name="Tutino M.L."/>
            <person name="Scarano G."/>
            <person name="Marino G."/>
            <person name="Sannia G."/>
            <person name="Cubellis M.V."/>
        </authorList>
    </citation>
    <scope>NUCLEOTIDE SEQUENCE [GENOMIC DNA]</scope>
    <source>
        <strain>DSM 5833 / MT-4</strain>
    </source>
</reference>
<reference key="2">
    <citation type="journal article" date="1997" name="Biochem. Biophys. Res. Commun.">
        <title>Expression of Sulfolobus solfataricus trpE and trpG genes in E. coli.</title>
        <authorList>
            <person name="Tutino M.L."/>
            <person name="Tosco A."/>
            <person name="Marino G."/>
            <person name="Sannia G."/>
        </authorList>
    </citation>
    <scope>NUCLEOTIDE SEQUENCE [GENOMIC DNA]</scope>
    <source>
        <strain>DSM 5833 / MT-4</strain>
    </source>
</reference>
<reference key="3">
    <citation type="journal article" date="2001" name="Proc. Natl. Acad. Sci. U.S.A.">
        <title>The complete genome of the crenarchaeon Sulfolobus solfataricus P2.</title>
        <authorList>
            <person name="She Q."/>
            <person name="Singh R.K."/>
            <person name="Confalonieri F."/>
            <person name="Zivanovic Y."/>
            <person name="Allard G."/>
            <person name="Awayez M.J."/>
            <person name="Chan-Weiher C.C.-Y."/>
            <person name="Clausen I.G."/>
            <person name="Curtis B.A."/>
            <person name="De Moors A."/>
            <person name="Erauso G."/>
            <person name="Fletcher C."/>
            <person name="Gordon P.M.K."/>
            <person name="Heikamp-de Jong I."/>
            <person name="Jeffries A.C."/>
            <person name="Kozera C.J."/>
            <person name="Medina N."/>
            <person name="Peng X."/>
            <person name="Thi-Ngoc H.P."/>
            <person name="Redder P."/>
            <person name="Schenk M.E."/>
            <person name="Theriault C."/>
            <person name="Tolstrup N."/>
            <person name="Charlebois R.L."/>
            <person name="Doolittle W.F."/>
            <person name="Duguet M."/>
            <person name="Gaasterland T."/>
            <person name="Garrett R.A."/>
            <person name="Ragan M.A."/>
            <person name="Sensen C.W."/>
            <person name="Van der Oost J."/>
        </authorList>
    </citation>
    <scope>NUCLEOTIDE SEQUENCE [LARGE SCALE GENOMIC DNA]</scope>
    <source>
        <strain>ATCC 35092 / DSM 1617 / JCM 11322 / P2</strain>
    </source>
</reference>
<reference key="4">
    <citation type="journal article" date="1999" name="Proc. Natl. Acad. Sci. U.S.A.">
        <title>The crystal structure of anthranilate synthase from Sulfolobus solfataricus: functional implications.</title>
        <authorList>
            <person name="Knoechel T."/>
            <person name="Ivens A."/>
            <person name="Hester G."/>
            <person name="Gonzalez A."/>
            <person name="Bauerle R."/>
            <person name="Wilmanns M."/>
            <person name="Kirschner K."/>
            <person name="Jansonius J.N."/>
        </authorList>
    </citation>
    <scope>X-RAY CRYSTALLOGRAPHY (2.5 ANGSTROMS)</scope>
    <scope>FUNCTION</scope>
    <scope>ACTIVITY REGULATION</scope>
    <scope>SUBUNIT</scope>
</reference>
<proteinExistence type="evidence at protein level"/>
<gene>
    <name type="primary">trpE</name>
    <name type="ordered locus">SSO0893</name>
</gene>
<protein>
    <recommendedName>
        <fullName>Anthranilate synthase component 1</fullName>
        <shortName>AS</shortName>
        <shortName>ASI</shortName>
        <ecNumber>4.1.3.27</ecNumber>
    </recommendedName>
</protein>
<feature type="chain" id="PRO_0000154132" description="Anthranilate synthase component 1">
    <location>
        <begin position="1"/>
        <end position="421"/>
    </location>
</feature>
<feature type="binding site" evidence="1">
    <location>
        <position position="31"/>
    </location>
    <ligand>
        <name>L-tryptophan</name>
        <dbReference type="ChEBI" id="CHEBI:57912"/>
    </ligand>
</feature>
<feature type="binding site" evidence="1">
    <location>
        <begin position="207"/>
        <end position="209"/>
    </location>
    <ligand>
        <name>L-tryptophan</name>
        <dbReference type="ChEBI" id="CHEBI:57912"/>
    </ligand>
</feature>
<feature type="binding site" evidence="1">
    <location>
        <begin position="242"/>
        <end position="243"/>
    </location>
    <ligand>
        <name>chorismate</name>
        <dbReference type="ChEBI" id="CHEBI:29748"/>
    </ligand>
</feature>
<feature type="binding site" evidence="1">
    <location>
        <position position="269"/>
    </location>
    <ligand>
        <name>Mg(2+)</name>
        <dbReference type="ChEBI" id="CHEBI:18420"/>
    </ligand>
</feature>
<feature type="binding site" evidence="1">
    <location>
        <position position="357"/>
    </location>
    <ligand>
        <name>chorismate</name>
        <dbReference type="ChEBI" id="CHEBI:29748"/>
    </ligand>
</feature>
<feature type="binding site" evidence="1">
    <location>
        <position position="377"/>
    </location>
    <ligand>
        <name>chorismate</name>
        <dbReference type="ChEBI" id="CHEBI:29748"/>
    </ligand>
</feature>
<feature type="binding site" evidence="1">
    <location>
        <begin position="391"/>
        <end position="393"/>
    </location>
    <ligand>
        <name>chorismate</name>
        <dbReference type="ChEBI" id="CHEBI:29748"/>
    </ligand>
</feature>
<feature type="binding site" evidence="1">
    <location>
        <position position="393"/>
    </location>
    <ligand>
        <name>chorismate</name>
        <dbReference type="ChEBI" id="CHEBI:29748"/>
    </ligand>
</feature>
<feature type="binding site" evidence="1">
    <location>
        <position position="406"/>
    </location>
    <ligand>
        <name>Mg(2+)</name>
        <dbReference type="ChEBI" id="CHEBI:18420"/>
    </ligand>
</feature>
<feature type="sequence conflict" description="In Ref. 1; AAA73379 and 2; CAA90311." evidence="3" ref="1 2">
    <original>A</original>
    <variation>R</variation>
    <location>
        <position position="337"/>
    </location>
</feature>
<feature type="strand" evidence="4">
    <location>
        <begin position="1"/>
        <end position="5"/>
    </location>
</feature>
<feature type="helix" evidence="4">
    <location>
        <begin position="6"/>
        <end position="8"/>
    </location>
</feature>
<feature type="helix" evidence="4">
    <location>
        <begin position="12"/>
        <end position="22"/>
    </location>
</feature>
<feature type="strand" evidence="4">
    <location>
        <begin position="24"/>
        <end position="30"/>
    </location>
</feature>
<feature type="strand" evidence="4">
    <location>
        <begin position="41"/>
        <end position="46"/>
    </location>
</feature>
<feature type="strand" evidence="4">
    <location>
        <begin position="52"/>
        <end position="54"/>
    </location>
</feature>
<feature type="helix" evidence="4">
    <location>
        <begin position="58"/>
        <end position="63"/>
    </location>
</feature>
<feature type="turn" evidence="4">
    <location>
        <begin position="64"/>
        <end position="68"/>
    </location>
</feature>
<feature type="strand" evidence="4">
    <location>
        <begin position="75"/>
        <end position="77"/>
    </location>
</feature>
<feature type="strand" evidence="4">
    <location>
        <begin position="79"/>
        <end position="86"/>
    </location>
</feature>
<feature type="helix" evidence="4">
    <location>
        <begin position="88"/>
        <end position="93"/>
    </location>
</feature>
<feature type="strand" evidence="4">
    <location>
        <begin position="103"/>
        <end position="105"/>
    </location>
</feature>
<feature type="strand" evidence="4">
    <location>
        <begin position="109"/>
        <end position="113"/>
    </location>
</feature>
<feature type="strand" evidence="4">
    <location>
        <begin position="116"/>
        <end position="122"/>
    </location>
</feature>
<feature type="helix" evidence="4">
    <location>
        <begin position="123"/>
        <end position="125"/>
    </location>
</feature>
<feature type="strand" evidence="4">
    <location>
        <begin position="127"/>
        <end position="132"/>
    </location>
</feature>
<feature type="strand" evidence="4">
    <location>
        <begin position="146"/>
        <end position="155"/>
    </location>
</feature>
<feature type="helix" evidence="4">
    <location>
        <begin position="157"/>
        <end position="173"/>
    </location>
</feature>
<feature type="strand" evidence="4">
    <location>
        <begin position="177"/>
        <end position="191"/>
    </location>
</feature>
<feature type="helix" evidence="4">
    <location>
        <begin position="194"/>
        <end position="203"/>
    </location>
</feature>
<feature type="strand" evidence="4">
    <location>
        <begin position="207"/>
        <end position="214"/>
    </location>
</feature>
<feature type="strand" evidence="4">
    <location>
        <begin position="217"/>
        <end position="224"/>
    </location>
</feature>
<feature type="strand" evidence="4">
    <location>
        <begin position="226"/>
        <end position="231"/>
    </location>
</feature>
<feature type="strand" evidence="4">
    <location>
        <begin position="234"/>
        <end position="237"/>
    </location>
</feature>
<feature type="strand" evidence="4">
    <location>
        <begin position="240"/>
        <end position="245"/>
    </location>
</feature>
<feature type="helix" evidence="4">
    <location>
        <begin position="250"/>
        <end position="261"/>
    </location>
</feature>
<feature type="helix" evidence="4">
    <location>
        <begin position="264"/>
        <end position="282"/>
    </location>
</feature>
<feature type="strand" evidence="4">
    <location>
        <begin position="291"/>
        <end position="300"/>
    </location>
</feature>
<feature type="strand" evidence="4">
    <location>
        <begin position="302"/>
        <end position="315"/>
    </location>
</feature>
<feature type="helix" evidence="4">
    <location>
        <begin position="321"/>
        <end position="328"/>
    </location>
</feature>
<feature type="helix" evidence="4">
    <location>
        <begin position="332"/>
        <end position="334"/>
    </location>
</feature>
<feature type="strand" evidence="4">
    <location>
        <begin position="335"/>
        <end position="338"/>
    </location>
</feature>
<feature type="helix" evidence="4">
    <location>
        <begin position="339"/>
        <end position="349"/>
    </location>
</feature>
<feature type="strand" evidence="4">
    <location>
        <begin position="350"/>
        <end position="353"/>
    </location>
</feature>
<feature type="turn" evidence="4">
    <location>
        <begin position="355"/>
        <end position="358"/>
    </location>
</feature>
<feature type="strand" evidence="4">
    <location>
        <begin position="359"/>
        <end position="365"/>
    </location>
</feature>
<feature type="strand" evidence="4">
    <location>
        <begin position="370"/>
        <end position="375"/>
    </location>
</feature>
<feature type="strand" evidence="4">
    <location>
        <begin position="377"/>
        <end position="382"/>
    </location>
</feature>
<feature type="strand" evidence="4">
    <location>
        <begin position="385"/>
        <end position="394"/>
    </location>
</feature>
<feature type="helix" evidence="4">
    <location>
        <begin position="400"/>
        <end position="417"/>
    </location>
</feature>